<protein>
    <recommendedName>
        <fullName>Troponin C, skeletal muscle</fullName>
    </recommendedName>
</protein>
<organism>
    <name type="scientific">Oryctolagus cuniculus</name>
    <name type="common">Rabbit</name>
    <dbReference type="NCBI Taxonomy" id="9986"/>
    <lineage>
        <taxon>Eukaryota</taxon>
        <taxon>Metazoa</taxon>
        <taxon>Chordata</taxon>
        <taxon>Craniata</taxon>
        <taxon>Vertebrata</taxon>
        <taxon>Euteleostomi</taxon>
        <taxon>Mammalia</taxon>
        <taxon>Eutheria</taxon>
        <taxon>Euarchontoglires</taxon>
        <taxon>Glires</taxon>
        <taxon>Lagomorpha</taxon>
        <taxon>Leporidae</taxon>
        <taxon>Oryctolagus</taxon>
    </lineage>
</organism>
<proteinExistence type="evidence at protein level"/>
<feature type="initiator methionine" description="Removed" evidence="2">
    <location>
        <position position="1"/>
    </location>
</feature>
<feature type="chain" id="PRO_0000073706" description="Troponin C, skeletal muscle">
    <location>
        <begin position="2"/>
        <end position="160"/>
    </location>
</feature>
<feature type="domain" description="EF-hand 1" evidence="1">
    <location>
        <begin position="15"/>
        <end position="50"/>
    </location>
</feature>
<feature type="domain" description="EF-hand 2" evidence="1">
    <location>
        <begin position="51"/>
        <end position="86"/>
    </location>
</feature>
<feature type="domain" description="EF-hand 3" evidence="1">
    <location>
        <begin position="91"/>
        <end position="126"/>
    </location>
</feature>
<feature type="domain" description="EF-hand 4" evidence="1">
    <location>
        <begin position="127"/>
        <end position="160"/>
    </location>
</feature>
<feature type="binding site" evidence="1">
    <location>
        <position position="28"/>
    </location>
    <ligand>
        <name>Ca(2+)</name>
        <dbReference type="ChEBI" id="CHEBI:29108"/>
        <label>1</label>
    </ligand>
</feature>
<feature type="binding site" evidence="1">
    <location>
        <position position="30"/>
    </location>
    <ligand>
        <name>Ca(2+)</name>
        <dbReference type="ChEBI" id="CHEBI:29108"/>
        <label>1</label>
    </ligand>
</feature>
<feature type="binding site" evidence="1">
    <location>
        <position position="34"/>
    </location>
    <ligand>
        <name>Ca(2+)</name>
        <dbReference type="ChEBI" id="CHEBI:29108"/>
        <label>1</label>
    </ligand>
</feature>
<feature type="binding site" evidence="1">
    <location>
        <position position="39"/>
    </location>
    <ligand>
        <name>Ca(2+)</name>
        <dbReference type="ChEBI" id="CHEBI:29108"/>
        <label>1</label>
    </ligand>
</feature>
<feature type="binding site" evidence="1">
    <location>
        <position position="64"/>
    </location>
    <ligand>
        <name>Ca(2+)</name>
        <dbReference type="ChEBI" id="CHEBI:29108"/>
        <label>2</label>
    </ligand>
</feature>
<feature type="binding site" evidence="1">
    <location>
        <position position="66"/>
    </location>
    <ligand>
        <name>Ca(2+)</name>
        <dbReference type="ChEBI" id="CHEBI:29108"/>
        <label>2</label>
    </ligand>
</feature>
<feature type="binding site" evidence="1">
    <location>
        <position position="68"/>
    </location>
    <ligand>
        <name>Ca(2+)</name>
        <dbReference type="ChEBI" id="CHEBI:29108"/>
        <label>2</label>
    </ligand>
</feature>
<feature type="binding site" evidence="1">
    <location>
        <position position="70"/>
    </location>
    <ligand>
        <name>Ca(2+)</name>
        <dbReference type="ChEBI" id="CHEBI:29108"/>
        <label>2</label>
    </ligand>
</feature>
<feature type="binding site" evidence="1">
    <location>
        <position position="75"/>
    </location>
    <ligand>
        <name>Ca(2+)</name>
        <dbReference type="ChEBI" id="CHEBI:29108"/>
        <label>2</label>
    </ligand>
</feature>
<feature type="binding site" evidence="1">
    <location>
        <position position="104"/>
    </location>
    <ligand>
        <name>Ca(2+)</name>
        <dbReference type="ChEBI" id="CHEBI:29108"/>
        <label>3</label>
    </ligand>
</feature>
<feature type="binding site" evidence="1">
    <location>
        <position position="106"/>
    </location>
    <ligand>
        <name>Ca(2+)</name>
        <dbReference type="ChEBI" id="CHEBI:29108"/>
        <label>3</label>
    </ligand>
</feature>
<feature type="binding site" evidence="1">
    <location>
        <position position="108"/>
    </location>
    <ligand>
        <name>Ca(2+)</name>
        <dbReference type="ChEBI" id="CHEBI:29108"/>
        <label>3</label>
    </ligand>
</feature>
<feature type="binding site" evidence="1">
    <location>
        <position position="110"/>
    </location>
    <ligand>
        <name>Ca(2+)</name>
        <dbReference type="ChEBI" id="CHEBI:29108"/>
        <label>3</label>
    </ligand>
</feature>
<feature type="binding site" evidence="1">
    <location>
        <position position="115"/>
    </location>
    <ligand>
        <name>Ca(2+)</name>
        <dbReference type="ChEBI" id="CHEBI:29108"/>
        <label>3</label>
    </ligand>
</feature>
<feature type="binding site" evidence="1">
    <location>
        <position position="140"/>
    </location>
    <ligand>
        <name>Ca(2+)</name>
        <dbReference type="ChEBI" id="CHEBI:29108"/>
        <label>4</label>
    </ligand>
</feature>
<feature type="binding site" evidence="1">
    <location>
        <position position="142"/>
    </location>
    <ligand>
        <name>Ca(2+)</name>
        <dbReference type="ChEBI" id="CHEBI:29108"/>
        <label>4</label>
    </ligand>
</feature>
<feature type="binding site" evidence="1">
    <location>
        <position position="144"/>
    </location>
    <ligand>
        <name>Ca(2+)</name>
        <dbReference type="ChEBI" id="CHEBI:29108"/>
        <label>4</label>
    </ligand>
</feature>
<feature type="binding site" evidence="1">
    <location>
        <position position="146"/>
    </location>
    <ligand>
        <name>Ca(2+)</name>
        <dbReference type="ChEBI" id="CHEBI:29108"/>
        <label>4</label>
    </ligand>
</feature>
<feature type="binding site" evidence="1">
    <location>
        <position position="151"/>
    </location>
    <ligand>
        <name>Ca(2+)</name>
        <dbReference type="ChEBI" id="CHEBI:29108"/>
        <label>4</label>
    </ligand>
</feature>
<feature type="modified residue" description="N-acetylthreonine" evidence="2">
    <location>
        <position position="2"/>
    </location>
</feature>
<feature type="sequence conflict" description="In Ref. 3; AA sequence." evidence="3" ref="3">
    <original>TD</original>
    <variation>DT</variation>
    <location>
        <begin position="2"/>
        <end position="3"/>
    </location>
</feature>
<feature type="helix" evidence="5">
    <location>
        <begin position="4"/>
        <end position="11"/>
    </location>
</feature>
<feature type="helix" evidence="5">
    <location>
        <begin position="14"/>
        <end position="27"/>
    </location>
</feature>
<feature type="strand" evidence="5">
    <location>
        <begin position="32"/>
        <end position="35"/>
    </location>
</feature>
<feature type="helix" evidence="5">
    <location>
        <begin position="37"/>
        <end position="46"/>
    </location>
</feature>
<feature type="helix" evidence="5">
    <location>
        <begin position="53"/>
        <end position="63"/>
    </location>
</feature>
<feature type="strand" evidence="4">
    <location>
        <begin position="64"/>
        <end position="66"/>
    </location>
</feature>
<feature type="strand" evidence="5">
    <location>
        <begin position="69"/>
        <end position="72"/>
    </location>
</feature>
<feature type="helix" evidence="5">
    <location>
        <begin position="73"/>
        <end position="103"/>
    </location>
</feature>
<feature type="strand" evidence="6">
    <location>
        <begin position="108"/>
        <end position="112"/>
    </location>
</feature>
<feature type="helix" evidence="5">
    <location>
        <begin position="113"/>
        <end position="123"/>
    </location>
</feature>
<feature type="helix" evidence="5">
    <location>
        <begin position="129"/>
        <end position="139"/>
    </location>
</feature>
<feature type="strand" evidence="5">
    <location>
        <begin position="144"/>
        <end position="147"/>
    </location>
</feature>
<feature type="helix" evidence="5">
    <location>
        <begin position="149"/>
        <end position="157"/>
    </location>
</feature>
<accession>P02586</accession>
<sequence>MTDQQAEARSYLSEEMIAEFKAAFDMFDADGGGDISVKELGTVMRMLGQTPTKEELDAIIEEVDEDGSGTIDFEEFLVMMVRQMKEDAKGKSEEELAECFRIFDRNADGYIDAEELAEIFRASGEHVTDEEIESLMKDGDKNNDGRIDFDEFLKMMEGVQ</sequence>
<reference key="1">
    <citation type="journal article" date="1987" name="J. Biol. Chem.">
        <title>Isolation and sequence of a cDNA clone for rabbit fast skeletal muscle troponin C. Homology with calmodulin and parvalbumin.</title>
        <authorList>
            <person name="Zot A.S."/>
            <person name="Potter J.D."/>
            <person name="Strauss W.L."/>
        </authorList>
    </citation>
    <scope>NUCLEOTIDE SEQUENCE [MRNA]</scope>
</reference>
<reference key="2">
    <citation type="journal article" date="1988" name="FEBS Lett.">
        <title>Cloning, sequencing and expression of a full-length rabbit fast skeletal troponin-C cDNA.</title>
        <authorList>
            <person name="Chen Q."/>
            <person name="Taljanidisz J."/>
            <person name="Satyapriya S."/>
            <person name="Tao T."/>
            <person name="Gergely J."/>
        </authorList>
    </citation>
    <scope>NUCLEOTIDE SEQUENCE [MRNA]</scope>
</reference>
<reference key="3">
    <citation type="journal article" date="1977" name="J. Biol. Chem.">
        <title>Determination of the amino acid sequence of troponon C from rabbit skeletal muscle.</title>
        <authorList>
            <person name="Collins J.H."/>
            <person name="Greaser M.L."/>
            <person name="Potter J.D."/>
            <person name="Horn M.J."/>
        </authorList>
    </citation>
    <scope>PROTEIN SEQUENCE OF 2-160</scope>
    <scope>ACETYLATION AT THR-2</scope>
</reference>
<reference key="4">
    <citation type="journal article" date="1975" name="Biochim. Biophys. Acta">
        <title>The predicted structure of the calcium-binding component of troponin.</title>
        <authorList>
            <person name="Kretsinger R.H."/>
            <person name="Barry C.D."/>
        </authorList>
    </citation>
    <scope>3D-STRUCTURE MODELING</scope>
</reference>
<reference key="5">
    <citation type="journal article" date="1991" name="Biochemistry">
        <title>Solution structure of a polypeptide dimer comprising the fourth Ca(2+)-binding site of troponin C by nuclear magnetic resonance spectroscopy.</title>
        <authorList>
            <person name="Kay L.E."/>
            <person name="Forman-Kay J.D."/>
            <person name="McCubbin W.D."/>
            <person name="Kay C.M."/>
        </authorList>
    </citation>
    <scope>STRUCTURE BY NMR OF 122-160</scope>
</reference>
<reference key="6">
    <citation type="journal article" date="1997" name="Structure">
        <title>Structures of four Ca2+-bound troponin C at 2.0-A resolution: further insights into the Ca2+-switch in the calmodulin superfamily.</title>
        <authorList>
            <person name="Houdusse A."/>
            <person name="Love M.L."/>
            <person name="Dominguez R."/>
            <person name="Grabarek Z."/>
            <person name="Cohen C."/>
        </authorList>
    </citation>
    <scope>X-RAY CRYSTALLOGRAPHY (1.9 ANGSTROMS)</scope>
</reference>
<reference key="7">
    <citation type="journal article" date="1999" name="Proteins">
        <title>Conformational variation of calcium-bound troponin C.</title>
        <authorList>
            <person name="Soman J."/>
            <person name="Tao T."/>
            <person name="Phillips G.N. Jr."/>
        </authorList>
    </citation>
    <scope>X-RAY CRYSTALLOGRAPHY (1.9 ANGSTROMS)</scope>
</reference>
<reference key="8">
    <citation type="journal article" date="1998" name="Proc. Natl. Acad. Sci. U.S.A.">
        <title>Crystal structure of troponin C in complex with troponin I fragment at 2.3-A resolution.</title>
        <authorList>
            <person name="Vassylyev D.G."/>
            <person name="Takeda S."/>
            <person name="Wakatsuki S."/>
            <person name="Maeda K."/>
            <person name="Maeda Y."/>
        </authorList>
    </citation>
    <scope>X-RAY CRYSTALLOGRAPHY (2.3 ANGSTROMS) OF COMPLEX WITH TNI</scope>
</reference>
<keyword id="KW-0002">3D-structure</keyword>
<keyword id="KW-0007">Acetylation</keyword>
<keyword id="KW-0106">Calcium</keyword>
<keyword id="KW-0903">Direct protein sequencing</keyword>
<keyword id="KW-0479">Metal-binding</keyword>
<keyword id="KW-0514">Muscle protein</keyword>
<keyword id="KW-1185">Reference proteome</keyword>
<keyword id="KW-0677">Repeat</keyword>
<comment type="function">
    <text>Troponin is the central regulatory protein of striated muscle contraction. Tn consists of three components: Tn-I which is the inhibitor of actomyosin ATPase, Tn-T which contains the binding site for tropomyosin and Tn-C. The binding of calcium to Tn-C abolishes the inhibitory action of Tn on actin filaments.</text>
</comment>
<comment type="miscellaneous">
    <text>Skeletal muscle troponin C binds four calcium ions.</text>
</comment>
<comment type="similarity">
    <text evidence="3">Belongs to the troponin C family.</text>
</comment>
<dbReference type="EMBL" id="J03462">
    <property type="protein sequence ID" value="AAA31481.1"/>
    <property type="molecule type" value="mRNA"/>
</dbReference>
<dbReference type="EMBL" id="Y00760">
    <property type="protein sequence ID" value="CAA68729.1"/>
    <property type="molecule type" value="mRNA"/>
</dbReference>
<dbReference type="PIR" id="A28442">
    <property type="entry name" value="TPRBCS"/>
</dbReference>
<dbReference type="RefSeq" id="NP_001076114.1">
    <property type="nucleotide sequence ID" value="NM_001082645.1"/>
</dbReference>
<dbReference type="PDB" id="1A2X">
    <property type="method" value="X-ray"/>
    <property type="resolution" value="2.30 A"/>
    <property type="chains" value="A=2-160"/>
</dbReference>
<dbReference type="PDB" id="1TCF">
    <property type="method" value="X-ray"/>
    <property type="resolution" value="1.90 A"/>
    <property type="chains" value="A=2-160"/>
</dbReference>
<dbReference type="PDB" id="1TN4">
    <property type="method" value="X-ray"/>
    <property type="resolution" value="1.95 A"/>
    <property type="chains" value="A=2-160"/>
</dbReference>
<dbReference type="PDB" id="2TN4">
    <property type="method" value="X-ray"/>
    <property type="resolution" value="2.00 A"/>
    <property type="chains" value="A=2-160"/>
</dbReference>
<dbReference type="PDBsum" id="1A2X"/>
<dbReference type="PDBsum" id="1TCF"/>
<dbReference type="PDBsum" id="1TN4"/>
<dbReference type="PDBsum" id="2TN4"/>
<dbReference type="BMRB" id="P02586"/>
<dbReference type="SMR" id="P02586"/>
<dbReference type="BioGRID" id="1172361">
    <property type="interactions" value="3"/>
</dbReference>
<dbReference type="CORUM" id="P02586"/>
<dbReference type="FunCoup" id="P02586">
    <property type="interactions" value="15"/>
</dbReference>
<dbReference type="IntAct" id="P02586">
    <property type="interactions" value="1"/>
</dbReference>
<dbReference type="iPTMnet" id="P02586"/>
<dbReference type="PaxDb" id="9986-ENSOCUP00000020944"/>
<dbReference type="GeneID" id="100009341"/>
<dbReference type="KEGG" id="ocu:100009341"/>
<dbReference type="CTD" id="7125"/>
<dbReference type="eggNOG" id="KOG0027">
    <property type="taxonomic scope" value="Eukaryota"/>
</dbReference>
<dbReference type="InParanoid" id="P02586"/>
<dbReference type="OrthoDB" id="26525at2759"/>
<dbReference type="EvolutionaryTrace" id="P02586"/>
<dbReference type="Proteomes" id="UP000001811">
    <property type="component" value="Unplaced"/>
</dbReference>
<dbReference type="GO" id="GO:0016460">
    <property type="term" value="C:myosin II complex"/>
    <property type="evidence" value="ECO:0007669"/>
    <property type="project" value="TreeGrafter"/>
</dbReference>
<dbReference type="GO" id="GO:0005509">
    <property type="term" value="F:calcium ion binding"/>
    <property type="evidence" value="ECO:0007669"/>
    <property type="project" value="InterPro"/>
</dbReference>
<dbReference type="GO" id="GO:0031014">
    <property type="term" value="F:troponin T binding"/>
    <property type="evidence" value="ECO:0000353"/>
    <property type="project" value="UniProtKB"/>
</dbReference>
<dbReference type="FunFam" id="1.10.238.10:FF:000107">
    <property type="entry name" value="Troponin C, skeletal muscle"/>
    <property type="match status" value="1"/>
</dbReference>
<dbReference type="Gene3D" id="1.10.238.10">
    <property type="entry name" value="EF-hand"/>
    <property type="match status" value="2"/>
</dbReference>
<dbReference type="InterPro" id="IPR050230">
    <property type="entry name" value="CALM/Myosin/TropC-like"/>
</dbReference>
<dbReference type="InterPro" id="IPR011992">
    <property type="entry name" value="EF-hand-dom_pair"/>
</dbReference>
<dbReference type="InterPro" id="IPR018247">
    <property type="entry name" value="EF_Hand_1_Ca_BS"/>
</dbReference>
<dbReference type="InterPro" id="IPR002048">
    <property type="entry name" value="EF_hand_dom"/>
</dbReference>
<dbReference type="PANTHER" id="PTHR23048">
    <property type="entry name" value="MYOSIN LIGHT CHAIN 1, 3"/>
    <property type="match status" value="1"/>
</dbReference>
<dbReference type="PANTHER" id="PTHR23048:SF57">
    <property type="entry name" value="TROPONIN C2, FAST SKELETAL TYPE"/>
    <property type="match status" value="1"/>
</dbReference>
<dbReference type="Pfam" id="PF13499">
    <property type="entry name" value="EF-hand_7"/>
    <property type="match status" value="2"/>
</dbReference>
<dbReference type="SMART" id="SM00054">
    <property type="entry name" value="EFh"/>
    <property type="match status" value="4"/>
</dbReference>
<dbReference type="SUPFAM" id="SSF47473">
    <property type="entry name" value="EF-hand"/>
    <property type="match status" value="1"/>
</dbReference>
<dbReference type="PROSITE" id="PS00018">
    <property type="entry name" value="EF_HAND_1"/>
    <property type="match status" value="4"/>
</dbReference>
<dbReference type="PROSITE" id="PS50222">
    <property type="entry name" value="EF_HAND_2"/>
    <property type="match status" value="4"/>
</dbReference>
<evidence type="ECO:0000255" key="1">
    <source>
        <dbReference type="PROSITE-ProRule" id="PRU00448"/>
    </source>
</evidence>
<evidence type="ECO:0000269" key="2">
    <source>
    </source>
</evidence>
<evidence type="ECO:0000305" key="3"/>
<evidence type="ECO:0007829" key="4">
    <source>
        <dbReference type="PDB" id="1A2X"/>
    </source>
</evidence>
<evidence type="ECO:0007829" key="5">
    <source>
        <dbReference type="PDB" id="1TCF"/>
    </source>
</evidence>
<evidence type="ECO:0007829" key="6">
    <source>
        <dbReference type="PDB" id="1TN4"/>
    </source>
</evidence>
<name>TNNC2_RABIT</name>
<gene>
    <name type="primary">TNNC2</name>
</gene>